<name>PSTB_XANCP</name>
<dbReference type="EC" id="7.3.2.1" evidence="1"/>
<dbReference type="EMBL" id="AE008922">
    <property type="protein sequence ID" value="AAM40819.1"/>
    <property type="molecule type" value="Genomic_DNA"/>
</dbReference>
<dbReference type="RefSeq" id="NP_636895.2">
    <property type="nucleotide sequence ID" value="NC_003902.1"/>
</dbReference>
<dbReference type="SMR" id="Q8PAG0"/>
<dbReference type="STRING" id="190485.XCC1524"/>
<dbReference type="EnsemblBacteria" id="AAM40819">
    <property type="protein sequence ID" value="AAM40819"/>
    <property type="gene ID" value="XCC1524"/>
</dbReference>
<dbReference type="KEGG" id="xcc:XCC1524"/>
<dbReference type="PATRIC" id="fig|190485.4.peg.1635"/>
<dbReference type="eggNOG" id="COG1117">
    <property type="taxonomic scope" value="Bacteria"/>
</dbReference>
<dbReference type="HOGENOM" id="CLU_000604_1_22_6"/>
<dbReference type="OrthoDB" id="9802264at2"/>
<dbReference type="Proteomes" id="UP000001010">
    <property type="component" value="Chromosome"/>
</dbReference>
<dbReference type="GO" id="GO:0005886">
    <property type="term" value="C:plasma membrane"/>
    <property type="evidence" value="ECO:0007669"/>
    <property type="project" value="UniProtKB-SubCell"/>
</dbReference>
<dbReference type="GO" id="GO:0005524">
    <property type="term" value="F:ATP binding"/>
    <property type="evidence" value="ECO:0007669"/>
    <property type="project" value="UniProtKB-KW"/>
</dbReference>
<dbReference type="GO" id="GO:0016887">
    <property type="term" value="F:ATP hydrolysis activity"/>
    <property type="evidence" value="ECO:0007669"/>
    <property type="project" value="InterPro"/>
</dbReference>
<dbReference type="GO" id="GO:0015415">
    <property type="term" value="F:ATPase-coupled phosphate ion transmembrane transporter activity"/>
    <property type="evidence" value="ECO:0007669"/>
    <property type="project" value="UniProtKB-EC"/>
</dbReference>
<dbReference type="GO" id="GO:0035435">
    <property type="term" value="P:phosphate ion transmembrane transport"/>
    <property type="evidence" value="ECO:0007669"/>
    <property type="project" value="InterPro"/>
</dbReference>
<dbReference type="CDD" id="cd03260">
    <property type="entry name" value="ABC_PstB_phosphate_transporter"/>
    <property type="match status" value="1"/>
</dbReference>
<dbReference type="FunFam" id="3.40.50.300:FF:000132">
    <property type="entry name" value="Phosphate import ATP-binding protein PstB"/>
    <property type="match status" value="1"/>
</dbReference>
<dbReference type="Gene3D" id="3.40.50.300">
    <property type="entry name" value="P-loop containing nucleotide triphosphate hydrolases"/>
    <property type="match status" value="1"/>
</dbReference>
<dbReference type="InterPro" id="IPR003593">
    <property type="entry name" value="AAA+_ATPase"/>
</dbReference>
<dbReference type="InterPro" id="IPR003439">
    <property type="entry name" value="ABC_transporter-like_ATP-bd"/>
</dbReference>
<dbReference type="InterPro" id="IPR017871">
    <property type="entry name" value="ABC_transporter-like_CS"/>
</dbReference>
<dbReference type="InterPro" id="IPR027417">
    <property type="entry name" value="P-loop_NTPase"/>
</dbReference>
<dbReference type="InterPro" id="IPR005670">
    <property type="entry name" value="PstB-like"/>
</dbReference>
<dbReference type="NCBIfam" id="TIGR00972">
    <property type="entry name" value="3a0107s01c2"/>
    <property type="match status" value="1"/>
</dbReference>
<dbReference type="PANTHER" id="PTHR43423">
    <property type="entry name" value="ABC TRANSPORTER I FAMILY MEMBER 17"/>
    <property type="match status" value="1"/>
</dbReference>
<dbReference type="PANTHER" id="PTHR43423:SF3">
    <property type="entry name" value="PHOSPHATE IMPORT ATP-BINDING PROTEIN PSTB"/>
    <property type="match status" value="1"/>
</dbReference>
<dbReference type="Pfam" id="PF00005">
    <property type="entry name" value="ABC_tran"/>
    <property type="match status" value="1"/>
</dbReference>
<dbReference type="SMART" id="SM00382">
    <property type="entry name" value="AAA"/>
    <property type="match status" value="1"/>
</dbReference>
<dbReference type="SUPFAM" id="SSF52540">
    <property type="entry name" value="P-loop containing nucleoside triphosphate hydrolases"/>
    <property type="match status" value="1"/>
</dbReference>
<dbReference type="PROSITE" id="PS00211">
    <property type="entry name" value="ABC_TRANSPORTER_1"/>
    <property type="match status" value="1"/>
</dbReference>
<dbReference type="PROSITE" id="PS50893">
    <property type="entry name" value="ABC_TRANSPORTER_2"/>
    <property type="match status" value="1"/>
</dbReference>
<dbReference type="PROSITE" id="PS51238">
    <property type="entry name" value="PSTB"/>
    <property type="match status" value="1"/>
</dbReference>
<organism>
    <name type="scientific">Xanthomonas campestris pv. campestris (strain ATCC 33913 / DSM 3586 / NCPPB 528 / LMG 568 / P 25)</name>
    <dbReference type="NCBI Taxonomy" id="190485"/>
    <lineage>
        <taxon>Bacteria</taxon>
        <taxon>Pseudomonadati</taxon>
        <taxon>Pseudomonadota</taxon>
        <taxon>Gammaproteobacteria</taxon>
        <taxon>Lysobacterales</taxon>
        <taxon>Lysobacteraceae</taxon>
        <taxon>Xanthomonas</taxon>
    </lineage>
</organism>
<evidence type="ECO:0000255" key="1">
    <source>
        <dbReference type="HAMAP-Rule" id="MF_01702"/>
    </source>
</evidence>
<comment type="function">
    <text evidence="1">Part of the ABC transporter complex PstSACB involved in phosphate import. Responsible for energy coupling to the transport system.</text>
</comment>
<comment type="catalytic activity">
    <reaction evidence="1">
        <text>phosphate(out) + ATP + H2O = ADP + 2 phosphate(in) + H(+)</text>
        <dbReference type="Rhea" id="RHEA:24440"/>
        <dbReference type="ChEBI" id="CHEBI:15377"/>
        <dbReference type="ChEBI" id="CHEBI:15378"/>
        <dbReference type="ChEBI" id="CHEBI:30616"/>
        <dbReference type="ChEBI" id="CHEBI:43474"/>
        <dbReference type="ChEBI" id="CHEBI:456216"/>
        <dbReference type="EC" id="7.3.2.1"/>
    </reaction>
</comment>
<comment type="subunit">
    <text evidence="1">The complex is composed of two ATP-binding proteins (PstB), two transmembrane proteins (PstC and PstA) and a solute-binding protein (PstS).</text>
</comment>
<comment type="subcellular location">
    <subcellularLocation>
        <location evidence="1">Cell inner membrane</location>
        <topology evidence="1">Peripheral membrane protein</topology>
    </subcellularLocation>
</comment>
<comment type="similarity">
    <text evidence="1">Belongs to the ABC transporter superfamily. Phosphate importer (TC 3.A.1.7) family.</text>
</comment>
<keyword id="KW-0067">ATP-binding</keyword>
<keyword id="KW-0997">Cell inner membrane</keyword>
<keyword id="KW-1003">Cell membrane</keyword>
<keyword id="KW-0472">Membrane</keyword>
<keyword id="KW-0547">Nucleotide-binding</keyword>
<keyword id="KW-0592">Phosphate transport</keyword>
<keyword id="KW-1185">Reference proteome</keyword>
<keyword id="KW-1278">Translocase</keyword>
<keyword id="KW-0813">Transport</keyword>
<reference key="1">
    <citation type="journal article" date="2002" name="Nature">
        <title>Comparison of the genomes of two Xanthomonas pathogens with differing host specificities.</title>
        <authorList>
            <person name="da Silva A.C.R."/>
            <person name="Ferro J.A."/>
            <person name="Reinach F.C."/>
            <person name="Farah C.S."/>
            <person name="Furlan L.R."/>
            <person name="Quaggio R.B."/>
            <person name="Monteiro-Vitorello C.B."/>
            <person name="Van Sluys M.A."/>
            <person name="Almeida N.F. Jr."/>
            <person name="Alves L.M.C."/>
            <person name="do Amaral A.M."/>
            <person name="Bertolini M.C."/>
            <person name="Camargo L.E.A."/>
            <person name="Camarotte G."/>
            <person name="Cannavan F."/>
            <person name="Cardozo J."/>
            <person name="Chambergo F."/>
            <person name="Ciapina L.P."/>
            <person name="Cicarelli R.M.B."/>
            <person name="Coutinho L.L."/>
            <person name="Cursino-Santos J.R."/>
            <person name="El-Dorry H."/>
            <person name="Faria J.B."/>
            <person name="Ferreira A.J.S."/>
            <person name="Ferreira R.C.C."/>
            <person name="Ferro M.I.T."/>
            <person name="Formighieri E.F."/>
            <person name="Franco M.C."/>
            <person name="Greggio C.C."/>
            <person name="Gruber A."/>
            <person name="Katsuyama A.M."/>
            <person name="Kishi L.T."/>
            <person name="Leite R.P."/>
            <person name="Lemos E.G.M."/>
            <person name="Lemos M.V.F."/>
            <person name="Locali E.C."/>
            <person name="Machado M.A."/>
            <person name="Madeira A.M.B.N."/>
            <person name="Martinez-Rossi N.M."/>
            <person name="Martins E.C."/>
            <person name="Meidanis J."/>
            <person name="Menck C.F.M."/>
            <person name="Miyaki C.Y."/>
            <person name="Moon D.H."/>
            <person name="Moreira L.M."/>
            <person name="Novo M.T.M."/>
            <person name="Okura V.K."/>
            <person name="Oliveira M.C."/>
            <person name="Oliveira V.R."/>
            <person name="Pereira H.A."/>
            <person name="Rossi A."/>
            <person name="Sena J.A.D."/>
            <person name="Silva C."/>
            <person name="de Souza R.F."/>
            <person name="Spinola L.A.F."/>
            <person name="Takita M.A."/>
            <person name="Tamura R.E."/>
            <person name="Teixeira E.C."/>
            <person name="Tezza R.I.D."/>
            <person name="Trindade dos Santos M."/>
            <person name="Truffi D."/>
            <person name="Tsai S.M."/>
            <person name="White F.F."/>
            <person name="Setubal J.C."/>
            <person name="Kitajima J.P."/>
        </authorList>
    </citation>
    <scope>NUCLEOTIDE SEQUENCE [LARGE SCALE GENOMIC DNA]</scope>
    <source>
        <strain>ATCC 33913 / DSM 3586 / NCPPB 528 / LMG 568 / P 25</strain>
    </source>
</reference>
<gene>
    <name evidence="1" type="primary">pstB</name>
    <name type="ordered locus">XCC1524</name>
</gene>
<proteinExistence type="inferred from homology"/>
<protein>
    <recommendedName>
        <fullName evidence="1">Phosphate import ATP-binding protein PstB</fullName>
        <ecNumber evidence="1">7.3.2.1</ecNumber>
    </recommendedName>
    <alternativeName>
        <fullName evidence="1">ABC phosphate transporter</fullName>
    </alternativeName>
    <alternativeName>
        <fullName evidence="1">Phosphate-transporting ATPase</fullName>
    </alternativeName>
</protein>
<feature type="chain" id="PRO_0000092934" description="Phosphate import ATP-binding protein PstB">
    <location>
        <begin position="1"/>
        <end position="267"/>
    </location>
</feature>
<feature type="domain" description="ABC transporter" evidence="1">
    <location>
        <begin position="21"/>
        <end position="262"/>
    </location>
</feature>
<feature type="binding site" evidence="1">
    <location>
        <begin position="53"/>
        <end position="60"/>
    </location>
    <ligand>
        <name>ATP</name>
        <dbReference type="ChEBI" id="CHEBI:30616"/>
    </ligand>
</feature>
<accession>Q8PAG0</accession>
<sequence>MHRIAVPAAKGAPTAQAPVKVAARNLDFYYDKYHALKGINIEIPEKRVTALIGPSGCGKSTLLRIFNRIYALYPKLEARGEVLLDGENILSPKYPMNRLRSKVGMVFQKPVPFPMTIFENVAYGIRHHEKLSKADMQNRVEHALRQGALWDEVKDKLGQSALGLSGGQQQRLCIARAVALRPDVLLLDEPTSALDPISTSRIEQLVEELKRDYTIVIVTHNMQQAARVSDYTAFMYLGDLIEHDRTETIFSQPSKQQTEDYITGRFG</sequence>